<proteinExistence type="inferred from homology"/>
<gene>
    <name evidence="1" type="primary">fliE</name>
    <name type="ordered locus">Bcep18194_A6412</name>
</gene>
<organism>
    <name type="scientific">Burkholderia lata (strain ATCC 17760 / DSM 23089 / LMG 22485 / NCIMB 9086 / R18194 / 383)</name>
    <dbReference type="NCBI Taxonomy" id="482957"/>
    <lineage>
        <taxon>Bacteria</taxon>
        <taxon>Pseudomonadati</taxon>
        <taxon>Pseudomonadota</taxon>
        <taxon>Betaproteobacteria</taxon>
        <taxon>Burkholderiales</taxon>
        <taxon>Burkholderiaceae</taxon>
        <taxon>Burkholderia</taxon>
        <taxon>Burkholderia cepacia complex</taxon>
    </lineage>
</organism>
<keyword id="KW-0975">Bacterial flagellum</keyword>
<feature type="chain" id="PRO_1000045851" description="Flagellar hook-basal body complex protein FliE">
    <location>
        <begin position="1"/>
        <end position="114"/>
    </location>
</feature>
<accession>Q39C10</accession>
<dbReference type="EMBL" id="CP000151">
    <property type="protein sequence ID" value="ABB10006.1"/>
    <property type="molecule type" value="Genomic_DNA"/>
</dbReference>
<dbReference type="RefSeq" id="WP_011353512.1">
    <property type="nucleotide sequence ID" value="NZ_CABVQB010000020.1"/>
</dbReference>
<dbReference type="SMR" id="Q39C10"/>
<dbReference type="GeneID" id="45096284"/>
<dbReference type="KEGG" id="bur:Bcep18194_A6412"/>
<dbReference type="PATRIC" id="fig|482957.22.peg.3440"/>
<dbReference type="HOGENOM" id="CLU_147249_0_2_4"/>
<dbReference type="Proteomes" id="UP000002705">
    <property type="component" value="Chromosome 1"/>
</dbReference>
<dbReference type="GO" id="GO:0009425">
    <property type="term" value="C:bacterial-type flagellum basal body"/>
    <property type="evidence" value="ECO:0007669"/>
    <property type="project" value="UniProtKB-SubCell"/>
</dbReference>
<dbReference type="GO" id="GO:0003774">
    <property type="term" value="F:cytoskeletal motor activity"/>
    <property type="evidence" value="ECO:0007669"/>
    <property type="project" value="InterPro"/>
</dbReference>
<dbReference type="GO" id="GO:0005198">
    <property type="term" value="F:structural molecule activity"/>
    <property type="evidence" value="ECO:0007669"/>
    <property type="project" value="InterPro"/>
</dbReference>
<dbReference type="GO" id="GO:0071973">
    <property type="term" value="P:bacterial-type flagellum-dependent cell motility"/>
    <property type="evidence" value="ECO:0007669"/>
    <property type="project" value="InterPro"/>
</dbReference>
<dbReference type="HAMAP" id="MF_00724">
    <property type="entry name" value="FliE"/>
    <property type="match status" value="1"/>
</dbReference>
<dbReference type="InterPro" id="IPR001624">
    <property type="entry name" value="FliE"/>
</dbReference>
<dbReference type="NCBIfam" id="TIGR00205">
    <property type="entry name" value="fliE"/>
    <property type="match status" value="1"/>
</dbReference>
<dbReference type="PANTHER" id="PTHR34653">
    <property type="match status" value="1"/>
</dbReference>
<dbReference type="PANTHER" id="PTHR34653:SF1">
    <property type="entry name" value="FLAGELLAR HOOK-BASAL BODY COMPLEX PROTEIN FLIE"/>
    <property type="match status" value="1"/>
</dbReference>
<dbReference type="Pfam" id="PF02049">
    <property type="entry name" value="FliE"/>
    <property type="match status" value="1"/>
</dbReference>
<dbReference type="PRINTS" id="PR01006">
    <property type="entry name" value="FLGHOOKFLIE"/>
</dbReference>
<evidence type="ECO:0000255" key="1">
    <source>
        <dbReference type="HAMAP-Rule" id="MF_00724"/>
    </source>
</evidence>
<comment type="subcellular location">
    <subcellularLocation>
        <location evidence="1">Bacterial flagellum basal body</location>
    </subcellularLocation>
</comment>
<comment type="similarity">
    <text evidence="1">Belongs to the FliE family.</text>
</comment>
<protein>
    <recommendedName>
        <fullName evidence="1">Flagellar hook-basal body complex protein FliE</fullName>
    </recommendedName>
</protein>
<reference key="1">
    <citation type="submission" date="2005-10" db="EMBL/GenBank/DDBJ databases">
        <title>Complete sequence of chromosome 1 of Burkholderia sp. 383.</title>
        <authorList>
            <consortium name="US DOE Joint Genome Institute"/>
            <person name="Copeland A."/>
            <person name="Lucas S."/>
            <person name="Lapidus A."/>
            <person name="Barry K."/>
            <person name="Detter J.C."/>
            <person name="Glavina T."/>
            <person name="Hammon N."/>
            <person name="Israni S."/>
            <person name="Pitluck S."/>
            <person name="Chain P."/>
            <person name="Malfatti S."/>
            <person name="Shin M."/>
            <person name="Vergez L."/>
            <person name="Schmutz J."/>
            <person name="Larimer F."/>
            <person name="Land M."/>
            <person name="Kyrpides N."/>
            <person name="Lykidis A."/>
            <person name="Richardson P."/>
        </authorList>
    </citation>
    <scope>NUCLEOTIDE SEQUENCE [LARGE SCALE GENOMIC DNA]</scope>
    <source>
        <strain>ATCC 17760 / DSM 23089 / LMG 22485 / NCIMB 9086 / R18194 / 383</strain>
    </source>
</reference>
<name>FLIE_BURL3</name>
<sequence length="114" mass="11569">MTANVSGIGSVLQQMQSMAAQASGGVASPTAALAGSGAATASTFASAMKASLDKISGDQQHALGEAQAFEVGAPNVSLNDVMVDMQKANIGFQFGLQVRNKLVSAYNDIMQMSV</sequence>